<gene>
    <name evidence="1" type="primary">ycgL</name>
    <name type="ordered locus">SARI_01126</name>
</gene>
<keyword id="KW-1185">Reference proteome</keyword>
<reference key="1">
    <citation type="submission" date="2007-11" db="EMBL/GenBank/DDBJ databases">
        <authorList>
            <consortium name="The Salmonella enterica serovar Arizonae Genome Sequencing Project"/>
            <person name="McClelland M."/>
            <person name="Sanderson E.K."/>
            <person name="Porwollik S."/>
            <person name="Spieth J."/>
            <person name="Clifton W.S."/>
            <person name="Fulton R."/>
            <person name="Chunyan W."/>
            <person name="Wollam A."/>
            <person name="Shah N."/>
            <person name="Pepin K."/>
            <person name="Bhonagiri V."/>
            <person name="Nash W."/>
            <person name="Johnson M."/>
            <person name="Thiruvilangam P."/>
            <person name="Wilson R."/>
        </authorList>
    </citation>
    <scope>NUCLEOTIDE SEQUENCE [LARGE SCALE GENOMIC DNA]</scope>
    <source>
        <strain>ATCC BAA-731 / CDC346-86 / RSK2980</strain>
    </source>
</reference>
<dbReference type="EMBL" id="CP000880">
    <property type="protein sequence ID" value="ABX21031.1"/>
    <property type="status" value="ALT_INIT"/>
    <property type="molecule type" value="Genomic_DNA"/>
</dbReference>
<dbReference type="SMR" id="A9MP50"/>
<dbReference type="STRING" id="41514.SARI_01126"/>
<dbReference type="KEGG" id="ses:SARI_01126"/>
<dbReference type="HOGENOM" id="CLU_155118_1_0_6"/>
<dbReference type="Proteomes" id="UP000002084">
    <property type="component" value="Chromosome"/>
</dbReference>
<dbReference type="Gene3D" id="3.10.510.20">
    <property type="entry name" value="YcgL domain"/>
    <property type="match status" value="1"/>
</dbReference>
<dbReference type="HAMAP" id="MF_01866">
    <property type="entry name" value="UPF0745"/>
    <property type="match status" value="1"/>
</dbReference>
<dbReference type="InterPro" id="IPR038068">
    <property type="entry name" value="YcgL-like_sf"/>
</dbReference>
<dbReference type="InterPro" id="IPR027354">
    <property type="entry name" value="YcgL_dom"/>
</dbReference>
<dbReference type="PANTHER" id="PTHR38109">
    <property type="entry name" value="PROTEIN YCGL"/>
    <property type="match status" value="1"/>
</dbReference>
<dbReference type="PANTHER" id="PTHR38109:SF1">
    <property type="entry name" value="PROTEIN YCGL"/>
    <property type="match status" value="1"/>
</dbReference>
<dbReference type="Pfam" id="PF05166">
    <property type="entry name" value="YcgL"/>
    <property type="match status" value="1"/>
</dbReference>
<dbReference type="SUPFAM" id="SSF160191">
    <property type="entry name" value="YcgL-like"/>
    <property type="match status" value="1"/>
</dbReference>
<dbReference type="PROSITE" id="PS51648">
    <property type="entry name" value="YCGL"/>
    <property type="match status" value="1"/>
</dbReference>
<evidence type="ECO:0000255" key="1">
    <source>
        <dbReference type="HAMAP-Rule" id="MF_01866"/>
    </source>
</evidence>
<evidence type="ECO:0000305" key="2"/>
<feature type="chain" id="PRO_0000375349" description="Protein YcgL">
    <location>
        <begin position="1"/>
        <end position="110"/>
    </location>
</feature>
<feature type="domain" description="YcgL" evidence="1">
    <location>
        <begin position="14"/>
        <end position="98"/>
    </location>
</feature>
<accession>A9MP50</accession>
<comment type="sequence caution" evidence="2">
    <conflict type="erroneous initiation">
        <sequence resource="EMBL-CDS" id="ABX21031"/>
    </conflict>
</comment>
<name>YCGL_SALAR</name>
<protein>
    <recommendedName>
        <fullName evidence="1">Protein YcgL</fullName>
    </recommendedName>
</protein>
<sequence length="110" mass="12690">MRQVTIPLIQSKSMFCVIYRSSKRDQTYLYVEKKDDFSRVPEALMKGFGQPQLAMILPLDGRKKLVNAELEKVKQALREQGYYLQLPPPPEDLLKQHLSTVGQNTSHADR</sequence>
<organism>
    <name type="scientific">Salmonella arizonae (strain ATCC BAA-731 / CDC346-86 / RSK2980)</name>
    <dbReference type="NCBI Taxonomy" id="41514"/>
    <lineage>
        <taxon>Bacteria</taxon>
        <taxon>Pseudomonadati</taxon>
        <taxon>Pseudomonadota</taxon>
        <taxon>Gammaproteobacteria</taxon>
        <taxon>Enterobacterales</taxon>
        <taxon>Enterobacteriaceae</taxon>
        <taxon>Salmonella</taxon>
    </lineage>
</organism>
<proteinExistence type="inferred from homology"/>